<accession>Q2LQN1</accession>
<name>RISB_SYNAS</name>
<dbReference type="EC" id="2.5.1.78" evidence="1"/>
<dbReference type="EMBL" id="CP000252">
    <property type="protein sequence ID" value="ABC76060.1"/>
    <property type="molecule type" value="Genomic_DNA"/>
</dbReference>
<dbReference type="RefSeq" id="WP_011416095.1">
    <property type="nucleotide sequence ID" value="NC_007759.1"/>
</dbReference>
<dbReference type="SMR" id="Q2LQN1"/>
<dbReference type="FunCoup" id="Q2LQN1">
    <property type="interactions" value="482"/>
</dbReference>
<dbReference type="STRING" id="56780.SYN_02372"/>
<dbReference type="KEGG" id="sat:SYN_02372"/>
<dbReference type="eggNOG" id="COG0054">
    <property type="taxonomic scope" value="Bacteria"/>
</dbReference>
<dbReference type="HOGENOM" id="CLU_089358_1_1_7"/>
<dbReference type="InParanoid" id="Q2LQN1"/>
<dbReference type="OrthoDB" id="9809709at2"/>
<dbReference type="UniPathway" id="UPA00275">
    <property type="reaction ID" value="UER00404"/>
</dbReference>
<dbReference type="Proteomes" id="UP000001933">
    <property type="component" value="Chromosome"/>
</dbReference>
<dbReference type="GO" id="GO:0005829">
    <property type="term" value="C:cytosol"/>
    <property type="evidence" value="ECO:0007669"/>
    <property type="project" value="TreeGrafter"/>
</dbReference>
<dbReference type="GO" id="GO:0009349">
    <property type="term" value="C:riboflavin synthase complex"/>
    <property type="evidence" value="ECO:0007669"/>
    <property type="project" value="InterPro"/>
</dbReference>
<dbReference type="GO" id="GO:0000906">
    <property type="term" value="F:6,7-dimethyl-8-ribityllumazine synthase activity"/>
    <property type="evidence" value="ECO:0007669"/>
    <property type="project" value="UniProtKB-UniRule"/>
</dbReference>
<dbReference type="GO" id="GO:0009231">
    <property type="term" value="P:riboflavin biosynthetic process"/>
    <property type="evidence" value="ECO:0007669"/>
    <property type="project" value="UniProtKB-UniRule"/>
</dbReference>
<dbReference type="CDD" id="cd09209">
    <property type="entry name" value="Lumazine_synthase-I"/>
    <property type="match status" value="1"/>
</dbReference>
<dbReference type="FunFam" id="3.40.50.960:FF:000001">
    <property type="entry name" value="6,7-dimethyl-8-ribityllumazine synthase"/>
    <property type="match status" value="1"/>
</dbReference>
<dbReference type="Gene3D" id="3.40.50.960">
    <property type="entry name" value="Lumazine/riboflavin synthase"/>
    <property type="match status" value="1"/>
</dbReference>
<dbReference type="HAMAP" id="MF_00178">
    <property type="entry name" value="Lumazine_synth"/>
    <property type="match status" value="1"/>
</dbReference>
<dbReference type="InterPro" id="IPR034964">
    <property type="entry name" value="LS"/>
</dbReference>
<dbReference type="InterPro" id="IPR002180">
    <property type="entry name" value="LS/RS"/>
</dbReference>
<dbReference type="InterPro" id="IPR036467">
    <property type="entry name" value="LS/RS_sf"/>
</dbReference>
<dbReference type="NCBIfam" id="TIGR00114">
    <property type="entry name" value="lumazine-synth"/>
    <property type="match status" value="1"/>
</dbReference>
<dbReference type="NCBIfam" id="NF000812">
    <property type="entry name" value="PRK00061.1-4"/>
    <property type="match status" value="1"/>
</dbReference>
<dbReference type="PANTHER" id="PTHR21058:SF0">
    <property type="entry name" value="6,7-DIMETHYL-8-RIBITYLLUMAZINE SYNTHASE"/>
    <property type="match status" value="1"/>
</dbReference>
<dbReference type="PANTHER" id="PTHR21058">
    <property type="entry name" value="6,7-DIMETHYL-8-RIBITYLLUMAZINE SYNTHASE DMRL SYNTHASE LUMAZINE SYNTHASE"/>
    <property type="match status" value="1"/>
</dbReference>
<dbReference type="Pfam" id="PF00885">
    <property type="entry name" value="DMRL_synthase"/>
    <property type="match status" value="1"/>
</dbReference>
<dbReference type="SUPFAM" id="SSF52121">
    <property type="entry name" value="Lumazine synthase"/>
    <property type="match status" value="1"/>
</dbReference>
<reference key="1">
    <citation type="journal article" date="2007" name="Proc. Natl. Acad. Sci. U.S.A.">
        <title>The genome of Syntrophus aciditrophicus: life at the thermodynamic limit of microbial growth.</title>
        <authorList>
            <person name="McInerney M.J."/>
            <person name="Rohlin L."/>
            <person name="Mouttaki H."/>
            <person name="Kim U."/>
            <person name="Krupp R.S."/>
            <person name="Rios-Hernandez L."/>
            <person name="Sieber J."/>
            <person name="Struchtemeyer C.G."/>
            <person name="Bhattacharyya A."/>
            <person name="Campbell J.W."/>
            <person name="Gunsalus R.P."/>
        </authorList>
    </citation>
    <scope>NUCLEOTIDE SEQUENCE [LARGE SCALE GENOMIC DNA]</scope>
    <source>
        <strain>SB</strain>
    </source>
</reference>
<evidence type="ECO:0000255" key="1">
    <source>
        <dbReference type="HAMAP-Rule" id="MF_00178"/>
    </source>
</evidence>
<protein>
    <recommendedName>
        <fullName evidence="1">6,7-dimethyl-8-ribityllumazine synthase</fullName>
        <shortName evidence="1">DMRL synthase</shortName>
        <shortName evidence="1">LS</shortName>
        <shortName evidence="1">Lumazine synthase</shortName>
        <ecNumber evidence="1">2.5.1.78</ecNumber>
    </recommendedName>
</protein>
<organism>
    <name type="scientific">Syntrophus aciditrophicus (strain SB)</name>
    <dbReference type="NCBI Taxonomy" id="56780"/>
    <lineage>
        <taxon>Bacteria</taxon>
        <taxon>Pseudomonadati</taxon>
        <taxon>Thermodesulfobacteriota</taxon>
        <taxon>Syntrophia</taxon>
        <taxon>Syntrophales</taxon>
        <taxon>Syntrophaceae</taxon>
        <taxon>Syntrophus</taxon>
    </lineage>
</organism>
<feature type="chain" id="PRO_1000040530" description="6,7-dimethyl-8-ribityllumazine synthase">
    <location>
        <begin position="1"/>
        <end position="154"/>
    </location>
</feature>
<feature type="active site" description="Proton donor" evidence="1">
    <location>
        <position position="89"/>
    </location>
</feature>
<feature type="binding site" evidence="1">
    <location>
        <position position="23"/>
    </location>
    <ligand>
        <name>5-amino-6-(D-ribitylamino)uracil</name>
        <dbReference type="ChEBI" id="CHEBI:15934"/>
    </ligand>
</feature>
<feature type="binding site" evidence="1">
    <location>
        <begin position="57"/>
        <end position="59"/>
    </location>
    <ligand>
        <name>5-amino-6-(D-ribitylamino)uracil</name>
        <dbReference type="ChEBI" id="CHEBI:15934"/>
    </ligand>
</feature>
<feature type="binding site" evidence="1">
    <location>
        <begin position="81"/>
        <end position="83"/>
    </location>
    <ligand>
        <name>5-amino-6-(D-ribitylamino)uracil</name>
        <dbReference type="ChEBI" id="CHEBI:15934"/>
    </ligand>
</feature>
<feature type="binding site" evidence="1">
    <location>
        <begin position="86"/>
        <end position="87"/>
    </location>
    <ligand>
        <name>(2S)-2-hydroxy-3-oxobutyl phosphate</name>
        <dbReference type="ChEBI" id="CHEBI:58830"/>
    </ligand>
</feature>
<feature type="binding site" evidence="1">
    <location>
        <position position="114"/>
    </location>
    <ligand>
        <name>5-amino-6-(D-ribitylamino)uracil</name>
        <dbReference type="ChEBI" id="CHEBI:15934"/>
    </ligand>
</feature>
<feature type="binding site" evidence="1">
    <location>
        <position position="128"/>
    </location>
    <ligand>
        <name>(2S)-2-hydroxy-3-oxobutyl phosphate</name>
        <dbReference type="ChEBI" id="CHEBI:58830"/>
    </ligand>
</feature>
<sequence length="154" mass="16370">MPTVTEGRLIAKGMKFGIAVSRFNDFICSRLLDGALDALTRSGAEGKDIQVYRVPGAFELPLVAKKLAVSQRFEAVICLGAVIRGATPHFEYVSAEVSKGIANASLDTGVPIAFGVLTTDTIEQAIERAGTKAGNKGWDAAMTAIEMVDLLRQI</sequence>
<comment type="function">
    <text evidence="1">Catalyzes the formation of 6,7-dimethyl-8-ribityllumazine by condensation of 5-amino-6-(D-ribitylamino)uracil with 3,4-dihydroxy-2-butanone 4-phosphate. This is the penultimate step in the biosynthesis of riboflavin.</text>
</comment>
<comment type="catalytic activity">
    <reaction evidence="1">
        <text>(2S)-2-hydroxy-3-oxobutyl phosphate + 5-amino-6-(D-ribitylamino)uracil = 6,7-dimethyl-8-(1-D-ribityl)lumazine + phosphate + 2 H2O + H(+)</text>
        <dbReference type="Rhea" id="RHEA:26152"/>
        <dbReference type="ChEBI" id="CHEBI:15377"/>
        <dbReference type="ChEBI" id="CHEBI:15378"/>
        <dbReference type="ChEBI" id="CHEBI:15934"/>
        <dbReference type="ChEBI" id="CHEBI:43474"/>
        <dbReference type="ChEBI" id="CHEBI:58201"/>
        <dbReference type="ChEBI" id="CHEBI:58830"/>
        <dbReference type="EC" id="2.5.1.78"/>
    </reaction>
</comment>
<comment type="pathway">
    <text evidence="1">Cofactor biosynthesis; riboflavin biosynthesis; riboflavin from 2-hydroxy-3-oxobutyl phosphate and 5-amino-6-(D-ribitylamino)uracil: step 1/2.</text>
</comment>
<comment type="similarity">
    <text evidence="1">Belongs to the DMRL synthase family.</text>
</comment>
<gene>
    <name evidence="1" type="primary">ribH</name>
    <name type="ordered locus">SYNAS_01810</name>
    <name type="ORF">SYN_02372</name>
</gene>
<keyword id="KW-1185">Reference proteome</keyword>
<keyword id="KW-0686">Riboflavin biosynthesis</keyword>
<keyword id="KW-0808">Transferase</keyword>
<proteinExistence type="inferred from homology"/>